<dbReference type="EMBL" id="CU928162">
    <property type="protein sequence ID" value="CAR06382.1"/>
    <property type="molecule type" value="Genomic_DNA"/>
</dbReference>
<dbReference type="RefSeq" id="WP_000845408.1">
    <property type="nucleotide sequence ID" value="NC_011745.1"/>
</dbReference>
<dbReference type="SMR" id="B7MP17"/>
<dbReference type="KEGG" id="ecq:ECED1_0161"/>
<dbReference type="HOGENOM" id="CLU_015263_7_0_6"/>
<dbReference type="Proteomes" id="UP000000748">
    <property type="component" value="Chromosome"/>
</dbReference>
<dbReference type="GO" id="GO:0005886">
    <property type="term" value="C:plasma membrane"/>
    <property type="evidence" value="ECO:0007669"/>
    <property type="project" value="UniProtKB-SubCell"/>
</dbReference>
<dbReference type="GO" id="GO:0015297">
    <property type="term" value="F:antiporter activity"/>
    <property type="evidence" value="ECO:0007669"/>
    <property type="project" value="UniProtKB-UniRule"/>
</dbReference>
<dbReference type="GO" id="GO:0005247">
    <property type="term" value="F:voltage-gated chloride channel activity"/>
    <property type="evidence" value="ECO:0007669"/>
    <property type="project" value="TreeGrafter"/>
</dbReference>
<dbReference type="CDD" id="cd01031">
    <property type="entry name" value="EriC"/>
    <property type="match status" value="1"/>
</dbReference>
<dbReference type="FunFam" id="1.10.3080.10:FF:000005">
    <property type="entry name" value="H(+)/Cl(-) exchange transporter ClcA"/>
    <property type="match status" value="1"/>
</dbReference>
<dbReference type="Gene3D" id="1.10.3080.10">
    <property type="entry name" value="Clc chloride channel"/>
    <property type="match status" value="1"/>
</dbReference>
<dbReference type="HAMAP" id="MF_01128">
    <property type="entry name" value="CLC_ClcA"/>
    <property type="match status" value="1"/>
</dbReference>
<dbReference type="InterPro" id="IPR023861">
    <property type="entry name" value="Cl-channel_ClcA"/>
</dbReference>
<dbReference type="InterPro" id="IPR014743">
    <property type="entry name" value="Cl-channel_core"/>
</dbReference>
<dbReference type="InterPro" id="IPR001807">
    <property type="entry name" value="ClC"/>
</dbReference>
<dbReference type="NCBIfam" id="NF003640">
    <property type="entry name" value="PRK05277.1"/>
    <property type="match status" value="1"/>
</dbReference>
<dbReference type="PANTHER" id="PTHR45711">
    <property type="entry name" value="CHLORIDE CHANNEL PROTEIN"/>
    <property type="match status" value="1"/>
</dbReference>
<dbReference type="PANTHER" id="PTHR45711:SF6">
    <property type="entry name" value="CHLORIDE CHANNEL PROTEIN"/>
    <property type="match status" value="1"/>
</dbReference>
<dbReference type="Pfam" id="PF00654">
    <property type="entry name" value="Voltage_CLC"/>
    <property type="match status" value="1"/>
</dbReference>
<dbReference type="PRINTS" id="PR00762">
    <property type="entry name" value="CLCHANNEL"/>
</dbReference>
<dbReference type="SUPFAM" id="SSF81340">
    <property type="entry name" value="Clc chloride channel"/>
    <property type="match status" value="1"/>
</dbReference>
<comment type="function">
    <text evidence="1">Proton-coupled chloride transporter. Functions as antiport system and exchanges two chloride ions for 1 proton. Probably acts as an electrical shunt for an outwardly-directed proton pump that is linked to amino acid decarboxylation, as part of the extreme acid resistance (XAR) response.</text>
</comment>
<comment type="catalytic activity">
    <reaction evidence="1">
        <text>2 chloride(in) + H(+)(out) = 2 chloride(out) + H(+)(in)</text>
        <dbReference type="Rhea" id="RHEA:29567"/>
        <dbReference type="ChEBI" id="CHEBI:15378"/>
        <dbReference type="ChEBI" id="CHEBI:17996"/>
    </reaction>
</comment>
<comment type="subunit">
    <text evidence="1">Homodimer.</text>
</comment>
<comment type="subcellular location">
    <subcellularLocation>
        <location evidence="1">Cell inner membrane</location>
        <topology evidence="1">Multi-pass membrane protein</topology>
    </subcellularLocation>
</comment>
<comment type="similarity">
    <text evidence="1">Belongs to the chloride channel (TC 2.A.49) family. ClcA subfamily.</text>
</comment>
<sequence>MKTDTPSLETPQAARLRRRQLIRQLLERDKTPLAILFMAAVVGTLVGLAAVAFDKGVAWLQNQRMGALVHTADNYPLLLTVAFLCSAVLAMFGYFLVRKYAPEAGGSGIPEIEGALEDQRPVRWWRVLPVKFFGGLGTLGGGMVLGREGPTVQIGGNIGRMVLDVFRLKGDEARHTLLATGAAAGLAAAFNAPLAGILFIIEEMRPQFRYTLISIKAVFIGVIMSTIMYRIFNHEVALIDVGKLSDAPLNTLWLYLILGIIFGIFGPIFNKWVLGMQDLLHRVHGGNITKWVLMGGAIGGLCGLLGFVAPATSGGGFNLIPIATAGNFSMGMLVFIFVARVITTLLCFSSGAPGGIFAPMLALGTVLGTAFGMVAVELFPQYHLEAGTFAIAGMGALLAASIRAPLTGIILVLEMTDNYQLILPMIITGLGATLLAQFTGGKPLYSAILARTLAKQEAEQLARSKAASASENT</sequence>
<protein>
    <recommendedName>
        <fullName evidence="1">H(+)/Cl(-) exchange transporter ClcA</fullName>
    </recommendedName>
</protein>
<proteinExistence type="inferred from homology"/>
<name>CLCA_ECO81</name>
<reference key="1">
    <citation type="journal article" date="2009" name="PLoS Genet.">
        <title>Organised genome dynamics in the Escherichia coli species results in highly diverse adaptive paths.</title>
        <authorList>
            <person name="Touchon M."/>
            <person name="Hoede C."/>
            <person name="Tenaillon O."/>
            <person name="Barbe V."/>
            <person name="Baeriswyl S."/>
            <person name="Bidet P."/>
            <person name="Bingen E."/>
            <person name="Bonacorsi S."/>
            <person name="Bouchier C."/>
            <person name="Bouvet O."/>
            <person name="Calteau A."/>
            <person name="Chiapello H."/>
            <person name="Clermont O."/>
            <person name="Cruveiller S."/>
            <person name="Danchin A."/>
            <person name="Diard M."/>
            <person name="Dossat C."/>
            <person name="Karoui M.E."/>
            <person name="Frapy E."/>
            <person name="Garry L."/>
            <person name="Ghigo J.M."/>
            <person name="Gilles A.M."/>
            <person name="Johnson J."/>
            <person name="Le Bouguenec C."/>
            <person name="Lescat M."/>
            <person name="Mangenot S."/>
            <person name="Martinez-Jehanne V."/>
            <person name="Matic I."/>
            <person name="Nassif X."/>
            <person name="Oztas S."/>
            <person name="Petit M.A."/>
            <person name="Pichon C."/>
            <person name="Rouy Z."/>
            <person name="Ruf C.S."/>
            <person name="Schneider D."/>
            <person name="Tourret J."/>
            <person name="Vacherie B."/>
            <person name="Vallenet D."/>
            <person name="Medigue C."/>
            <person name="Rocha E.P.C."/>
            <person name="Denamur E."/>
        </authorList>
    </citation>
    <scope>NUCLEOTIDE SEQUENCE [LARGE SCALE GENOMIC DNA]</scope>
    <source>
        <strain>ED1a</strain>
    </source>
</reference>
<feature type="chain" id="PRO_1000164071" description="H(+)/Cl(-) exchange transporter ClcA">
    <location>
        <begin position="1"/>
        <end position="473"/>
    </location>
</feature>
<feature type="topological domain" description="Cytoplasmic" evidence="1">
    <location>
        <begin position="1"/>
        <end position="32"/>
    </location>
</feature>
<feature type="transmembrane region" description="Helical" evidence="1">
    <location>
        <begin position="33"/>
        <end position="69"/>
    </location>
</feature>
<feature type="topological domain" description="Periplasmic" evidence="1">
    <location>
        <begin position="70"/>
        <end position="76"/>
    </location>
</feature>
<feature type="transmembrane region" description="Helical" evidence="1">
    <location>
        <begin position="77"/>
        <end position="100"/>
    </location>
</feature>
<feature type="intramembrane region" description="Helical" evidence="1">
    <location>
        <begin position="109"/>
        <end position="116"/>
    </location>
</feature>
<feature type="topological domain" description="Cytoplasmic" evidence="1">
    <location>
        <begin position="117"/>
        <end position="123"/>
    </location>
</feature>
<feature type="transmembrane region" description="Helical" evidence="1">
    <location>
        <begin position="124"/>
        <end position="141"/>
    </location>
</feature>
<feature type="transmembrane region" description="Helical" evidence="1">
    <location>
        <begin position="148"/>
        <end position="166"/>
    </location>
</feature>
<feature type="topological domain" description="Cytoplasmic" evidence="1">
    <location>
        <begin position="167"/>
        <end position="176"/>
    </location>
</feature>
<feature type="intramembrane region" description="Helical" evidence="1">
    <location>
        <begin position="177"/>
        <end position="189"/>
    </location>
</feature>
<feature type="intramembrane region" description="Helical" evidence="1">
    <location>
        <begin position="193"/>
        <end position="201"/>
    </location>
</feature>
<feature type="topological domain" description="Cytoplasmic" evidence="1">
    <location>
        <begin position="202"/>
        <end position="214"/>
    </location>
</feature>
<feature type="transmembrane region" description="Helical" evidence="1">
    <location>
        <begin position="215"/>
        <end position="232"/>
    </location>
</feature>
<feature type="topological domain" description="Periplasmic" evidence="1">
    <location>
        <begin position="233"/>
        <end position="252"/>
    </location>
</feature>
<feature type="transmembrane region" description="Helical" evidence="1">
    <location>
        <begin position="253"/>
        <end position="281"/>
    </location>
</feature>
<feature type="topological domain" description="Cytoplasmic" evidence="1">
    <location>
        <begin position="282"/>
        <end position="287"/>
    </location>
</feature>
<feature type="transmembrane region" description="Helical" evidence="1">
    <location>
        <begin position="288"/>
        <end position="309"/>
    </location>
</feature>
<feature type="topological domain" description="Periplasmic" evidence="1">
    <location>
        <begin position="310"/>
        <end position="329"/>
    </location>
</feature>
<feature type="transmembrane region" description="Helical" evidence="1">
    <location>
        <begin position="330"/>
        <end position="349"/>
    </location>
</feature>
<feature type="transmembrane region" description="Helical" evidence="1">
    <location>
        <begin position="355"/>
        <end position="376"/>
    </location>
</feature>
<feature type="topological domain" description="Periplasmic" evidence="1">
    <location>
        <begin position="377"/>
        <end position="386"/>
    </location>
</feature>
<feature type="intramembrane region" description="Helical" evidence="1">
    <location>
        <begin position="387"/>
        <end position="401"/>
    </location>
</feature>
<feature type="intramembrane region" description="Note=Loop between two helices" evidence="1">
    <location>
        <begin position="402"/>
        <end position="404"/>
    </location>
</feature>
<feature type="intramembrane region" description="Helical" evidence="1">
    <location>
        <begin position="405"/>
        <end position="416"/>
    </location>
</feature>
<feature type="intramembrane region" description="Note=Loop between two helices" evidence="1">
    <location>
        <begin position="417"/>
        <end position="421"/>
    </location>
</feature>
<feature type="transmembrane region" description="Helical" evidence="1">
    <location>
        <begin position="422"/>
        <end position="438"/>
    </location>
</feature>
<feature type="topological domain" description="Cytoplasmic" evidence="1">
    <location>
        <begin position="439"/>
        <end position="473"/>
    </location>
</feature>
<feature type="short sequence motif" description="Selectivity filter part_1" evidence="1">
    <location>
        <begin position="106"/>
        <end position="110"/>
    </location>
</feature>
<feature type="short sequence motif" description="Selectivity filter part_2" evidence="1">
    <location>
        <begin position="146"/>
        <end position="150"/>
    </location>
</feature>
<feature type="short sequence motif" description="Selectivity filter part_3" evidence="1">
    <location>
        <begin position="355"/>
        <end position="359"/>
    </location>
</feature>
<feature type="binding site" evidence="1">
    <location>
        <position position="107"/>
    </location>
    <ligand>
        <name>chloride</name>
        <dbReference type="ChEBI" id="CHEBI:17996"/>
    </ligand>
</feature>
<feature type="binding site" evidence="1">
    <location>
        <position position="356"/>
    </location>
    <ligand>
        <name>chloride</name>
        <dbReference type="ChEBI" id="CHEBI:17996"/>
    </ligand>
</feature>
<feature type="binding site" evidence="1">
    <location>
        <position position="357"/>
    </location>
    <ligand>
        <name>chloride</name>
        <dbReference type="ChEBI" id="CHEBI:17996"/>
    </ligand>
</feature>
<feature type="binding site" evidence="1">
    <location>
        <position position="445"/>
    </location>
    <ligand>
        <name>chloride</name>
        <dbReference type="ChEBI" id="CHEBI:17996"/>
    </ligand>
</feature>
<feature type="site" description="Mediates proton transfer from the outer aqueous phase to the interior of the protein; involved in linking H(+) and Cl(-) transport" evidence="1">
    <location>
        <position position="148"/>
    </location>
</feature>
<feature type="site" description="Mediates proton transfer from the protein to the inner aqueous phase" evidence="1">
    <location>
        <position position="203"/>
    </location>
</feature>
<evidence type="ECO:0000255" key="1">
    <source>
        <dbReference type="HAMAP-Rule" id="MF_01128"/>
    </source>
</evidence>
<accession>B7MP17</accession>
<organism>
    <name type="scientific">Escherichia coli O81 (strain ED1a)</name>
    <dbReference type="NCBI Taxonomy" id="585397"/>
    <lineage>
        <taxon>Bacteria</taxon>
        <taxon>Pseudomonadati</taxon>
        <taxon>Pseudomonadota</taxon>
        <taxon>Gammaproteobacteria</taxon>
        <taxon>Enterobacterales</taxon>
        <taxon>Enterobacteriaceae</taxon>
        <taxon>Escherichia</taxon>
    </lineage>
</organism>
<gene>
    <name evidence="1" type="primary">clcA</name>
    <name evidence="1" type="synonym">eriC</name>
    <name type="ordered locus">ECED1_0161</name>
</gene>
<keyword id="KW-0050">Antiport</keyword>
<keyword id="KW-0997">Cell inner membrane</keyword>
<keyword id="KW-1003">Cell membrane</keyword>
<keyword id="KW-0868">Chloride</keyword>
<keyword id="KW-0406">Ion transport</keyword>
<keyword id="KW-0472">Membrane</keyword>
<keyword id="KW-0812">Transmembrane</keyword>
<keyword id="KW-1133">Transmembrane helix</keyword>
<keyword id="KW-0813">Transport</keyword>